<protein>
    <recommendedName>
        <fullName evidence="1">Cytochrome b559 subunit beta</fullName>
    </recommendedName>
    <alternativeName>
        <fullName evidence="1">PSII reaction center subunit VI</fullName>
    </alternativeName>
</protein>
<accession>Q2MIH1</accession>
<comment type="function">
    <text evidence="1">This b-type cytochrome is tightly associated with the reaction center of photosystem II (PSII). PSII is a light-driven water:plastoquinone oxidoreductase that uses light energy to abstract electrons from H(2)O, generating O(2) and a proton gradient subsequently used for ATP formation. It consists of a core antenna complex that captures photons, and an electron transfer chain that converts photonic excitation into a charge separation.</text>
</comment>
<comment type="cofactor">
    <cofactor evidence="1">
        <name>heme b</name>
        <dbReference type="ChEBI" id="CHEBI:60344"/>
    </cofactor>
    <text evidence="1">With its partner (PsbE) binds heme. PSII binds additional chlorophylls, carotenoids and specific lipids.</text>
</comment>
<comment type="subunit">
    <text evidence="1">Heterodimer of an alpha subunit and a beta subunit. PSII is composed of 1 copy each of membrane proteins PsbA, PsbB, PsbC, PsbD, PsbE, PsbF, PsbH, PsbI, PsbJ, PsbK, PsbL, PsbM, PsbT, PsbX, PsbY, PsbZ, Psb30/Ycf12, at least 3 peripheral proteins of the oxygen-evolving complex and a large number of cofactors. It forms dimeric complexes.</text>
</comment>
<comment type="subcellular location">
    <subcellularLocation>
        <location evidence="1">Plastid</location>
        <location evidence="1">Chloroplast thylakoid membrane</location>
        <topology evidence="1">Single-pass membrane protein</topology>
    </subcellularLocation>
</comment>
<comment type="similarity">
    <text evidence="1">Belongs to the PsbE/PsbF family.</text>
</comment>
<feature type="chain" id="PRO_0000233649" description="Cytochrome b559 subunit beta">
    <location>
        <begin position="1"/>
        <end position="39"/>
    </location>
</feature>
<feature type="transmembrane region" description="Helical" evidence="1">
    <location>
        <begin position="14"/>
        <end position="30"/>
    </location>
</feature>
<feature type="binding site" description="axial binding residue" evidence="1">
    <location>
        <position position="18"/>
    </location>
    <ligand>
        <name>heme</name>
        <dbReference type="ChEBI" id="CHEBI:30413"/>
        <note>ligand shared with alpha subunit</note>
    </ligand>
    <ligandPart>
        <name>Fe</name>
        <dbReference type="ChEBI" id="CHEBI:18248"/>
    </ligandPart>
</feature>
<organism>
    <name type="scientific">Solanum bulbocastanum</name>
    <name type="common">Wild potato</name>
    <dbReference type="NCBI Taxonomy" id="147425"/>
    <lineage>
        <taxon>Eukaryota</taxon>
        <taxon>Viridiplantae</taxon>
        <taxon>Streptophyta</taxon>
        <taxon>Embryophyta</taxon>
        <taxon>Tracheophyta</taxon>
        <taxon>Spermatophyta</taxon>
        <taxon>Magnoliopsida</taxon>
        <taxon>eudicotyledons</taxon>
        <taxon>Gunneridae</taxon>
        <taxon>Pentapetalae</taxon>
        <taxon>asterids</taxon>
        <taxon>lamiids</taxon>
        <taxon>Solanales</taxon>
        <taxon>Solanaceae</taxon>
        <taxon>Solanoideae</taxon>
        <taxon>Solaneae</taxon>
        <taxon>Solanum</taxon>
    </lineage>
</organism>
<keyword id="KW-0150">Chloroplast</keyword>
<keyword id="KW-0249">Electron transport</keyword>
<keyword id="KW-0349">Heme</keyword>
<keyword id="KW-0408">Iron</keyword>
<keyword id="KW-0472">Membrane</keyword>
<keyword id="KW-0479">Metal-binding</keyword>
<keyword id="KW-0602">Photosynthesis</keyword>
<keyword id="KW-0604">Photosystem II</keyword>
<keyword id="KW-0934">Plastid</keyword>
<keyword id="KW-0793">Thylakoid</keyword>
<keyword id="KW-0812">Transmembrane</keyword>
<keyword id="KW-1133">Transmembrane helix</keyword>
<keyword id="KW-0813">Transport</keyword>
<name>PSBF_SOLBU</name>
<proteinExistence type="inferred from homology"/>
<gene>
    <name evidence="1" type="primary">psbF</name>
</gene>
<reference key="1">
    <citation type="journal article" date="2006" name="Theor. Appl. Genet.">
        <title>Complete chloroplast genome sequences of Solanum bulbocastanum, Solanum lycopersicum and comparative analyses with other Solanaceae genomes.</title>
        <authorList>
            <person name="Daniell H."/>
            <person name="Lee S.-B."/>
            <person name="Grevich J."/>
            <person name="Saski C."/>
            <person name="Quesada-Vargas T."/>
            <person name="Guda C."/>
            <person name="Tomkins J."/>
            <person name="Jansen R.K."/>
        </authorList>
    </citation>
    <scope>NUCLEOTIDE SEQUENCE [LARGE SCALE GENOMIC DNA]</scope>
    <source>
        <strain>cv. PT29</strain>
    </source>
</reference>
<dbReference type="EMBL" id="DQ347958">
    <property type="protein sequence ID" value="ABC56229.1"/>
    <property type="molecule type" value="Genomic_DNA"/>
</dbReference>
<dbReference type="RefSeq" id="YP_538864.1">
    <property type="nucleotide sequence ID" value="NC_007943.1"/>
</dbReference>
<dbReference type="SMR" id="Q2MIH1"/>
<dbReference type="GeneID" id="3989440"/>
<dbReference type="GO" id="GO:0009535">
    <property type="term" value="C:chloroplast thylakoid membrane"/>
    <property type="evidence" value="ECO:0007669"/>
    <property type="project" value="UniProtKB-SubCell"/>
</dbReference>
<dbReference type="GO" id="GO:0009539">
    <property type="term" value="C:photosystem II reaction center"/>
    <property type="evidence" value="ECO:0007669"/>
    <property type="project" value="InterPro"/>
</dbReference>
<dbReference type="GO" id="GO:0009055">
    <property type="term" value="F:electron transfer activity"/>
    <property type="evidence" value="ECO:0007669"/>
    <property type="project" value="UniProtKB-UniRule"/>
</dbReference>
<dbReference type="GO" id="GO:0020037">
    <property type="term" value="F:heme binding"/>
    <property type="evidence" value="ECO:0007669"/>
    <property type="project" value="InterPro"/>
</dbReference>
<dbReference type="GO" id="GO:0005506">
    <property type="term" value="F:iron ion binding"/>
    <property type="evidence" value="ECO:0007669"/>
    <property type="project" value="UniProtKB-UniRule"/>
</dbReference>
<dbReference type="GO" id="GO:0009767">
    <property type="term" value="P:photosynthetic electron transport chain"/>
    <property type="evidence" value="ECO:0007669"/>
    <property type="project" value="InterPro"/>
</dbReference>
<dbReference type="HAMAP" id="MF_00643">
    <property type="entry name" value="PSII_PsbF"/>
    <property type="match status" value="1"/>
</dbReference>
<dbReference type="InterPro" id="IPR006241">
    <property type="entry name" value="PSII_cyt_b559_bsu"/>
</dbReference>
<dbReference type="InterPro" id="IPR006216">
    <property type="entry name" value="PSII_cyt_b559_CS"/>
</dbReference>
<dbReference type="InterPro" id="IPR013081">
    <property type="entry name" value="PSII_cyt_b559_N"/>
</dbReference>
<dbReference type="NCBIfam" id="TIGR01333">
    <property type="entry name" value="cyt_b559_beta"/>
    <property type="match status" value="1"/>
</dbReference>
<dbReference type="Pfam" id="PF00283">
    <property type="entry name" value="Cytochrom_B559"/>
    <property type="match status" value="1"/>
</dbReference>
<dbReference type="PIRSF" id="PIRSF000037">
    <property type="entry name" value="PsbF"/>
    <property type="match status" value="1"/>
</dbReference>
<dbReference type="SUPFAM" id="SSF161045">
    <property type="entry name" value="Cytochrome b559 subunits"/>
    <property type="match status" value="1"/>
</dbReference>
<dbReference type="PROSITE" id="PS00537">
    <property type="entry name" value="CYTOCHROME_B559"/>
    <property type="match status" value="1"/>
</dbReference>
<sequence length="39" mass="4484">MTIDRTYPIFTVRWLAVHGLAVPTVFFLGSISAMQFIQR</sequence>
<geneLocation type="chloroplast"/>
<evidence type="ECO:0000255" key="1">
    <source>
        <dbReference type="HAMAP-Rule" id="MF_00643"/>
    </source>
</evidence>